<comment type="function">
    <text evidence="2 4">Beta-adrenergic receptors mediate the catecholamine-induced activation of adenylate cyclase through the action of G proteins. This receptor binds epinephrine and norepinephrine with approximately equal affinity. Mediates Ras activation through G(s)-alpha- and cAMP-mediated signaling (By similarity). Involved in the regulation of sleep/wake behaviors (By similarity).</text>
</comment>
<comment type="subunit">
    <text evidence="2">Interacts (via C-terminus PDZ motif) with RAPGEF2; the interaction is direct. Interacts with GOPC, MAGI3 and DLG4 (By similarity).</text>
</comment>
<comment type="subcellular location">
    <subcellularLocation>
        <location evidence="3">Cell membrane</location>
        <topology evidence="3">Multi-pass membrane protein</topology>
    </subcellularLocation>
    <subcellularLocation>
        <location evidence="1">Early endosome</location>
    </subcellularLocation>
    <text evidence="1">Colocalizes with RAPGEF2 at the plasma membrane. Found in the Golgi upon GOPC overexpression (By similarity).</text>
</comment>
<comment type="domain">
    <text evidence="1">The PDZ domain-binding motif mediates competitive interactions with GOPC, MAGI3 and DLG4 and plays a role in subcellular location of the receptor.</text>
</comment>
<comment type="PTM">
    <text>Homologous desensitization of the receptor is mediated by its phosphorylation by beta-adrenergic receptor kinase.</text>
</comment>
<comment type="similarity">
    <text evidence="6">Belongs to the G-protein coupled receptor 1 family. Adrenergic receptor subfamily. ADRB1 sub-subfamily.</text>
</comment>
<evidence type="ECO:0000250" key="1"/>
<evidence type="ECO:0000250" key="2">
    <source>
        <dbReference type="UniProtKB" id="P08588"/>
    </source>
</evidence>
<evidence type="ECO:0000250" key="3">
    <source>
        <dbReference type="UniProtKB" id="P18090"/>
    </source>
</evidence>
<evidence type="ECO:0000250" key="4">
    <source>
        <dbReference type="UniProtKB" id="P34971"/>
    </source>
</evidence>
<evidence type="ECO:0000255" key="5"/>
<evidence type="ECO:0000255" key="6">
    <source>
        <dbReference type="PROSITE-ProRule" id="PRU00521"/>
    </source>
</evidence>
<evidence type="ECO:0000256" key="7">
    <source>
        <dbReference type="SAM" id="MobiDB-lite"/>
    </source>
</evidence>
<evidence type="ECO:0000305" key="8"/>
<feature type="chain" id="PRO_0000069119" description="Beta-1 adrenergic receptor">
    <location>
        <begin position="1"/>
        <end position="480"/>
    </location>
</feature>
<feature type="topological domain" description="Extracellular" evidence="1">
    <location>
        <begin position="1"/>
        <end position="55"/>
    </location>
</feature>
<feature type="transmembrane region" description="Helical; Name=1" evidence="1">
    <location>
        <begin position="56"/>
        <end position="84"/>
    </location>
</feature>
<feature type="topological domain" description="Cytoplasmic" evidence="1">
    <location>
        <begin position="85"/>
        <end position="93"/>
    </location>
</feature>
<feature type="transmembrane region" description="Helical; Name=2" evidence="1">
    <location>
        <begin position="94"/>
        <end position="120"/>
    </location>
</feature>
<feature type="topological domain" description="Extracellular" evidence="1">
    <location>
        <begin position="121"/>
        <end position="132"/>
    </location>
</feature>
<feature type="transmembrane region" description="Helical; Name=3" evidence="1">
    <location>
        <begin position="133"/>
        <end position="154"/>
    </location>
</feature>
<feature type="topological domain" description="Cytoplasmic" evidence="1">
    <location>
        <begin position="155"/>
        <end position="172"/>
    </location>
</feature>
<feature type="transmembrane region" description="Helical; Name=4" evidence="1">
    <location>
        <begin position="173"/>
        <end position="196"/>
    </location>
</feature>
<feature type="topological domain" description="Extracellular" evidence="1">
    <location>
        <begin position="197"/>
        <end position="222"/>
    </location>
</feature>
<feature type="transmembrane region" description="Helical; Name=5" evidence="1">
    <location>
        <begin position="223"/>
        <end position="248"/>
    </location>
</feature>
<feature type="topological domain" description="Cytoplasmic" evidence="1">
    <location>
        <begin position="249"/>
        <end position="322"/>
    </location>
</feature>
<feature type="transmembrane region" description="Helical; Name=6" evidence="1">
    <location>
        <begin position="323"/>
        <end position="352"/>
    </location>
</feature>
<feature type="topological domain" description="Extracellular" evidence="1">
    <location>
        <begin position="353"/>
        <end position="357"/>
    </location>
</feature>
<feature type="transmembrane region" description="Helical; Name=7" evidence="1">
    <location>
        <begin position="358"/>
        <end position="380"/>
    </location>
</feature>
<feature type="topological domain" description="Cytoplasmic" evidence="1">
    <location>
        <begin position="381"/>
        <end position="480"/>
    </location>
</feature>
<feature type="region of interest" description="Disordered" evidence="7">
    <location>
        <begin position="269"/>
        <end position="301"/>
    </location>
</feature>
<feature type="region of interest" description="Disordered" evidence="7">
    <location>
        <begin position="406"/>
        <end position="480"/>
    </location>
</feature>
<feature type="short sequence motif" description="PDZ-Binding" evidence="1">
    <location>
        <begin position="477"/>
        <end position="480"/>
    </location>
</feature>
<feature type="compositionally biased region" description="Pro residues" evidence="7">
    <location>
        <begin position="270"/>
        <end position="294"/>
    </location>
</feature>
<feature type="modified residue" description="Phosphoserine; by PKA" evidence="5">
    <location>
        <position position="315"/>
    </location>
</feature>
<feature type="modified residue" description="Phosphoserine; by PKA" evidence="5">
    <location>
        <position position="415"/>
    </location>
</feature>
<feature type="modified residue" description="Phosphoserine" evidence="3">
    <location>
        <position position="431"/>
    </location>
</feature>
<feature type="lipid moiety-binding region" description="S-palmitoyl cysteine" evidence="1">
    <location>
        <position position="395"/>
    </location>
</feature>
<feature type="glycosylation site" description="N-linked (GlcNAc...) asparagine" evidence="8">
    <location>
        <position position="15"/>
    </location>
</feature>
<feature type="disulfide bond" evidence="6">
    <location>
        <begin position="131"/>
        <end position="216"/>
    </location>
</feature>
<feature type="disulfide bond" evidence="6">
    <location>
        <begin position="209"/>
        <end position="215"/>
    </location>
</feature>
<accession>P47899</accession>
<gene>
    <name type="primary">ADRB1</name>
</gene>
<protein>
    <recommendedName>
        <fullName>Beta-1 adrenergic receptor</fullName>
    </recommendedName>
    <alternativeName>
        <fullName>Beta-1 adrenoreceptor</fullName>
        <shortName>Beta-1 adrenoceptor</shortName>
    </alternativeName>
</protein>
<dbReference type="EMBL" id="X75540">
    <property type="protein sequence ID" value="CAA53228.1"/>
    <property type="molecule type" value="Genomic_DNA"/>
</dbReference>
<dbReference type="PIR" id="I53053">
    <property type="entry name" value="I53053"/>
</dbReference>
<dbReference type="RefSeq" id="NP_001276795.1">
    <property type="nucleotide sequence ID" value="NM_001289866.1"/>
</dbReference>
<dbReference type="SMR" id="P47899"/>
<dbReference type="FunCoup" id="P47899">
    <property type="interactions" value="1362"/>
</dbReference>
<dbReference type="STRING" id="9544.ENSMMUP00000048016"/>
<dbReference type="GlyCosmos" id="P47899">
    <property type="glycosylation" value="1 site, No reported glycans"/>
</dbReference>
<dbReference type="GeneID" id="100426598"/>
<dbReference type="KEGG" id="mcc:100426598"/>
<dbReference type="CTD" id="153"/>
<dbReference type="InParanoid" id="P47899"/>
<dbReference type="OrthoDB" id="5975661at2759"/>
<dbReference type="Proteomes" id="UP000006718">
    <property type="component" value="Unassembled WGS sequence"/>
</dbReference>
<dbReference type="GO" id="GO:0005769">
    <property type="term" value="C:early endosome"/>
    <property type="evidence" value="ECO:0000250"/>
    <property type="project" value="UniProtKB"/>
</dbReference>
<dbReference type="GO" id="GO:0005886">
    <property type="term" value="C:plasma membrane"/>
    <property type="evidence" value="ECO:0000250"/>
    <property type="project" value="UniProtKB"/>
</dbReference>
<dbReference type="GO" id="GO:0004940">
    <property type="term" value="F:beta1-adrenergic receptor activity"/>
    <property type="evidence" value="ECO:0000250"/>
    <property type="project" value="UniProtKB"/>
</dbReference>
<dbReference type="GO" id="GO:0071880">
    <property type="term" value="P:adenylate cyclase-activating adrenergic receptor signaling pathway"/>
    <property type="evidence" value="ECO:0000250"/>
    <property type="project" value="UniProtKB"/>
</dbReference>
<dbReference type="GO" id="GO:0002025">
    <property type="term" value="P:norepinephrine-epinephrine-mediated vasodilation involved in regulation of systemic arterial blood pressure"/>
    <property type="evidence" value="ECO:0000318"/>
    <property type="project" value="GO_Central"/>
</dbReference>
<dbReference type="GO" id="GO:0045823">
    <property type="term" value="P:positive regulation of heart contraction"/>
    <property type="evidence" value="ECO:0007669"/>
    <property type="project" value="InterPro"/>
</dbReference>
<dbReference type="GO" id="GO:0043410">
    <property type="term" value="P:positive regulation of MAPK cascade"/>
    <property type="evidence" value="ECO:0000318"/>
    <property type="project" value="GO_Central"/>
</dbReference>
<dbReference type="GO" id="GO:0045187">
    <property type="term" value="P:regulation of circadian sleep/wake cycle, sleep"/>
    <property type="evidence" value="ECO:0000250"/>
    <property type="project" value="UniProtKB"/>
</dbReference>
<dbReference type="CDD" id="cd15958">
    <property type="entry name" value="7tmA_Beta1_AR"/>
    <property type="match status" value="1"/>
</dbReference>
<dbReference type="FunFam" id="1.20.1070.10:FF:001045">
    <property type="entry name" value="Beta-1 adrenergic receptor"/>
    <property type="match status" value="1"/>
</dbReference>
<dbReference type="Gene3D" id="1.20.1070.10">
    <property type="entry name" value="Rhodopsin 7-helix transmembrane proteins"/>
    <property type="match status" value="1"/>
</dbReference>
<dbReference type="InterPro" id="IPR002233">
    <property type="entry name" value="ADR_fam"/>
</dbReference>
<dbReference type="InterPro" id="IPR000507">
    <property type="entry name" value="ADRB1_rcpt"/>
</dbReference>
<dbReference type="InterPro" id="IPR000276">
    <property type="entry name" value="GPCR_Rhodpsn"/>
</dbReference>
<dbReference type="InterPro" id="IPR017452">
    <property type="entry name" value="GPCR_Rhodpsn_7TM"/>
</dbReference>
<dbReference type="PANTHER" id="PTHR24248">
    <property type="entry name" value="ADRENERGIC RECEPTOR-RELATED G-PROTEIN COUPLED RECEPTOR"/>
    <property type="match status" value="1"/>
</dbReference>
<dbReference type="PANTHER" id="PTHR24248:SF54">
    <property type="entry name" value="BETA-1 ADRENERGIC RECEPTOR"/>
    <property type="match status" value="1"/>
</dbReference>
<dbReference type="Pfam" id="PF00001">
    <property type="entry name" value="7tm_1"/>
    <property type="match status" value="1"/>
</dbReference>
<dbReference type="PRINTS" id="PR01103">
    <property type="entry name" value="ADRENERGICR"/>
</dbReference>
<dbReference type="PRINTS" id="PR00561">
    <property type="entry name" value="ADRENRGCB1AR"/>
</dbReference>
<dbReference type="PRINTS" id="PR00237">
    <property type="entry name" value="GPCRRHODOPSN"/>
</dbReference>
<dbReference type="SMART" id="SM01381">
    <property type="entry name" value="7TM_GPCR_Srsx"/>
    <property type="match status" value="1"/>
</dbReference>
<dbReference type="SUPFAM" id="SSF81321">
    <property type="entry name" value="Family A G protein-coupled receptor-like"/>
    <property type="match status" value="1"/>
</dbReference>
<dbReference type="PROSITE" id="PS00237">
    <property type="entry name" value="G_PROTEIN_RECEP_F1_1"/>
    <property type="match status" value="1"/>
</dbReference>
<dbReference type="PROSITE" id="PS50262">
    <property type="entry name" value="G_PROTEIN_RECEP_F1_2"/>
    <property type="match status" value="1"/>
</dbReference>
<organism>
    <name type="scientific">Macaca mulatta</name>
    <name type="common">Rhesus macaque</name>
    <dbReference type="NCBI Taxonomy" id="9544"/>
    <lineage>
        <taxon>Eukaryota</taxon>
        <taxon>Metazoa</taxon>
        <taxon>Chordata</taxon>
        <taxon>Craniata</taxon>
        <taxon>Vertebrata</taxon>
        <taxon>Euteleostomi</taxon>
        <taxon>Mammalia</taxon>
        <taxon>Eutheria</taxon>
        <taxon>Euarchontoglires</taxon>
        <taxon>Primates</taxon>
        <taxon>Haplorrhini</taxon>
        <taxon>Catarrhini</taxon>
        <taxon>Cercopithecidae</taxon>
        <taxon>Cercopithecinae</taxon>
        <taxon>Macaca</taxon>
    </lineage>
</organism>
<sequence>MGAGALVLGASEPGNLSSAAPLPDGVATAARLLVPASPPASLLPPASEGPEPLSQQWTAGMGLLMALIVLLIVAGNVLVIVAIAKTPRLQTLTNLFIMSLASADLVMGLLVVPFGATIVVWGRWEYGSFFCELWTSVDVLCVTASIETLCVIALDRYLAITSPFRYQSLLTRARARGLVCTVWAISALVSFLPILMHWWRAESDEARRCYNDPKCCDFVTNRAYAIASSVVSFYVPLCIMAFVYLRVFREAQKQVKKIDSCERRFLGGPARPPSPSPSPSPSPVPAPPPGPPRPAAAAATTAPLVNGRAGKRRPSRLVALREQKALKTLGIIMGVFTLCWLPFFLANVVKAFHRELVPDRLFVFFNWLGYANSAFNPIIYCRSPDFRNAFQRLLCCARRAARRRHAAHGDRPRASGCLARPGPPPSPGAASDDDDDDVVGATQPARLLEPWAGCNGGAAADSDSSLDEPCRPGFASESKV</sequence>
<reference key="1">
    <citation type="journal article" date="1994" name="DNA Seq.">
        <title>The rhesus macaque beta 1-adrenergic receptor gene: structure of the gene and comparison of the flanking sequences with the rat beta 1-adrenergic receptor gene.</title>
        <authorList>
            <person name="Searles R.P."/>
            <person name="Nipper V.J."/>
            <person name="Machida C.A."/>
        </authorList>
    </citation>
    <scope>NUCLEOTIDE SEQUENCE [GENOMIC DNA]</scope>
</reference>
<proteinExistence type="inferred from homology"/>
<name>ADRB1_MACMU</name>
<keyword id="KW-1003">Cell membrane</keyword>
<keyword id="KW-1015">Disulfide bond</keyword>
<keyword id="KW-0967">Endosome</keyword>
<keyword id="KW-0297">G-protein coupled receptor</keyword>
<keyword id="KW-0325">Glycoprotein</keyword>
<keyword id="KW-0449">Lipoprotein</keyword>
<keyword id="KW-0472">Membrane</keyword>
<keyword id="KW-0564">Palmitate</keyword>
<keyword id="KW-0597">Phosphoprotein</keyword>
<keyword id="KW-0675">Receptor</keyword>
<keyword id="KW-1185">Reference proteome</keyword>
<keyword id="KW-0807">Transducer</keyword>
<keyword id="KW-0812">Transmembrane</keyword>
<keyword id="KW-1133">Transmembrane helix</keyword>